<accession>Q481E4</accession>
<protein>
    <recommendedName>
        <fullName evidence="1">UPF0352 protein CPS_2611</fullName>
    </recommendedName>
</protein>
<proteinExistence type="evidence at protein level"/>
<organism>
    <name type="scientific">Colwellia psychrerythraea (strain 34H / ATCC BAA-681)</name>
    <name type="common">Vibrio psychroerythus</name>
    <dbReference type="NCBI Taxonomy" id="167879"/>
    <lineage>
        <taxon>Bacteria</taxon>
        <taxon>Pseudomonadati</taxon>
        <taxon>Pseudomonadota</taxon>
        <taxon>Gammaproteobacteria</taxon>
        <taxon>Alteromonadales</taxon>
        <taxon>Colwelliaceae</taxon>
        <taxon>Colwellia</taxon>
    </lineage>
</organism>
<gene>
    <name type="ordered locus">CPS_2611</name>
</gene>
<comment type="similarity">
    <text evidence="1">Belongs to the UPF0352 family.</text>
</comment>
<feature type="chain" id="PRO_0000201783" description="UPF0352 protein CPS_2611">
    <location>
        <begin position="1"/>
        <end position="68"/>
    </location>
</feature>
<feature type="helix" evidence="2">
    <location>
        <begin position="9"/>
        <end position="25"/>
    </location>
</feature>
<feature type="helix" evidence="2">
    <location>
        <begin position="30"/>
        <end position="45"/>
    </location>
</feature>
<feature type="helix" evidence="2">
    <location>
        <begin position="50"/>
        <end position="52"/>
    </location>
</feature>
<feature type="helix" evidence="2">
    <location>
        <begin position="53"/>
        <end position="68"/>
    </location>
</feature>
<evidence type="ECO:0000255" key="1">
    <source>
        <dbReference type="HAMAP-Rule" id="MF_00816"/>
    </source>
</evidence>
<evidence type="ECO:0007829" key="2">
    <source>
        <dbReference type="PDB" id="2OTA"/>
    </source>
</evidence>
<keyword id="KW-0002">3D-structure</keyword>
<reference key="1">
    <citation type="journal article" date="2005" name="Proc. Natl. Acad. Sci. U.S.A.">
        <title>The psychrophilic lifestyle as revealed by the genome sequence of Colwellia psychrerythraea 34H through genomic and proteomic analyses.</title>
        <authorList>
            <person name="Methe B.A."/>
            <person name="Nelson K.E."/>
            <person name="Deming J.W."/>
            <person name="Momen B."/>
            <person name="Melamud E."/>
            <person name="Zhang X."/>
            <person name="Moult J."/>
            <person name="Madupu R."/>
            <person name="Nelson W.C."/>
            <person name="Dodson R.J."/>
            <person name="Brinkac L.M."/>
            <person name="Daugherty S.C."/>
            <person name="Durkin A.S."/>
            <person name="DeBoy R.T."/>
            <person name="Kolonay J.F."/>
            <person name="Sullivan S.A."/>
            <person name="Zhou L."/>
            <person name="Davidsen T.M."/>
            <person name="Wu M."/>
            <person name="Huston A.L."/>
            <person name="Lewis M."/>
            <person name="Weaver B."/>
            <person name="Weidman J.F."/>
            <person name="Khouri H."/>
            <person name="Utterback T.R."/>
            <person name="Feldblyum T.V."/>
            <person name="Fraser C.M."/>
        </authorList>
    </citation>
    <scope>NUCLEOTIDE SEQUENCE [LARGE SCALE GENOMIC DNA]</scope>
    <source>
        <strain>34H / ATCC BAA-681</strain>
    </source>
</reference>
<dbReference type="EMBL" id="CP000083">
    <property type="protein sequence ID" value="AAZ26870.1"/>
    <property type="molecule type" value="Genomic_DNA"/>
</dbReference>
<dbReference type="RefSeq" id="WP_011043419.1">
    <property type="nucleotide sequence ID" value="NC_003910.7"/>
</dbReference>
<dbReference type="PDB" id="2JR2">
    <property type="method" value="NMR"/>
    <property type="chains" value="A/B=1-68"/>
</dbReference>
<dbReference type="PDB" id="2OTA">
    <property type="method" value="X-ray"/>
    <property type="resolution" value="2.20 A"/>
    <property type="chains" value="A/B=1-68"/>
</dbReference>
<dbReference type="PDBsum" id="2JR2"/>
<dbReference type="PDBsum" id="2OTA"/>
<dbReference type="BMRB" id="Q481E4"/>
<dbReference type="SMR" id="Q481E4"/>
<dbReference type="STRING" id="167879.CPS_2611"/>
<dbReference type="KEGG" id="cps:CPS_2611"/>
<dbReference type="eggNOG" id="COG3082">
    <property type="taxonomic scope" value="Bacteria"/>
</dbReference>
<dbReference type="HOGENOM" id="CLU_175457_0_0_6"/>
<dbReference type="EvolutionaryTrace" id="Q481E4"/>
<dbReference type="Proteomes" id="UP000000547">
    <property type="component" value="Chromosome"/>
</dbReference>
<dbReference type="Gene3D" id="1.10.3390.10">
    <property type="entry name" value="YejL-like"/>
    <property type="match status" value="1"/>
</dbReference>
<dbReference type="HAMAP" id="MF_00816">
    <property type="entry name" value="UPF0352"/>
    <property type="match status" value="1"/>
</dbReference>
<dbReference type="InterPro" id="IPR009857">
    <property type="entry name" value="UPF0352"/>
</dbReference>
<dbReference type="InterPro" id="IPR023202">
    <property type="entry name" value="YejL_sf"/>
</dbReference>
<dbReference type="Pfam" id="PF07208">
    <property type="entry name" value="DUF1414"/>
    <property type="match status" value="1"/>
</dbReference>
<dbReference type="PIRSF" id="PIRSF006188">
    <property type="entry name" value="UCP006188"/>
    <property type="match status" value="1"/>
</dbReference>
<dbReference type="SUPFAM" id="SSF158651">
    <property type="entry name" value="YejL-like"/>
    <property type="match status" value="1"/>
</dbReference>
<name>Y2611_COLP3</name>
<sequence>MPIVSKYSNERVEKIIQDLLDVLVKEEVTPDLALMCLGNAVTNIIAQVPESKRVAVVDNFTKALKQSV</sequence>